<organism>
    <name type="scientific">Vaccinia virus (strain Copenhagen)</name>
    <name type="common">VACV</name>
    <dbReference type="NCBI Taxonomy" id="10249"/>
    <lineage>
        <taxon>Viruses</taxon>
        <taxon>Varidnaviria</taxon>
        <taxon>Bamfordvirae</taxon>
        <taxon>Nucleocytoviricota</taxon>
        <taxon>Pokkesviricetes</taxon>
        <taxon>Chitovirales</taxon>
        <taxon>Poxviridae</taxon>
        <taxon>Chordopoxvirinae</taxon>
        <taxon>Orthopoxvirus</taxon>
        <taxon>Vaccinia virus</taxon>
    </lineage>
</organism>
<evidence type="ECO:0000255" key="1">
    <source>
        <dbReference type="PROSITE-ProRule" id="PRU00206"/>
    </source>
</evidence>
<evidence type="ECO:0000305" key="2"/>
<accession>P21071</accession>
<comment type="miscellaneous">
    <text>The A53R protein from Western Reserve and Copenhagen strains are predicted to be inactive because of mutations that introduce stop codons or frameshifts when compared to other poxiviruses.</text>
</comment>
<comment type="similarity">
    <text evidence="2">Belongs to the poxviridae A53R protein family.</text>
</comment>
<sequence length="103" mass="12032">MIILKDGYKEFADCMYYFLHYYIGYGRYTYSATNGSCDKGEYLDKRHNQCCNRCPPGEFAKVRCNGNDNTKCERCPPHTYTTIPIILMDVINVENAQQDHLIR</sequence>
<organismHost>
    <name type="scientific">Homo sapiens</name>
    <name type="common">Human</name>
    <dbReference type="NCBI Taxonomy" id="9606"/>
</organismHost>
<keyword id="KW-1015">Disulfide bond</keyword>
<keyword id="KW-0426">Late protein</keyword>
<keyword id="KW-1185">Reference proteome</keyword>
<keyword id="KW-0677">Repeat</keyword>
<proteinExistence type="inferred from homology"/>
<dbReference type="EMBL" id="M35027">
    <property type="protein sequence ID" value="AAA48188.1"/>
    <property type="molecule type" value="Genomic_DNA"/>
</dbReference>
<dbReference type="PIR" id="A42523">
    <property type="entry name" value="A42523"/>
</dbReference>
<dbReference type="SMR" id="P21071"/>
<dbReference type="Proteomes" id="UP000008269">
    <property type="component" value="Segment"/>
</dbReference>
<dbReference type="Gene3D" id="2.10.50.10">
    <property type="entry name" value="Tumor Necrosis Factor Receptor, subunit A, domain 2"/>
    <property type="match status" value="1"/>
</dbReference>
<dbReference type="InterPro" id="IPR001368">
    <property type="entry name" value="TNFR/NGFR_Cys_rich_reg"/>
</dbReference>
<dbReference type="Pfam" id="PF00020">
    <property type="entry name" value="TNFR_c6"/>
    <property type="match status" value="1"/>
</dbReference>
<dbReference type="SMART" id="SM00208">
    <property type="entry name" value="TNFR"/>
    <property type="match status" value="1"/>
</dbReference>
<dbReference type="SUPFAM" id="SSF57586">
    <property type="entry name" value="TNF receptor-like"/>
    <property type="match status" value="1"/>
</dbReference>
<dbReference type="PROSITE" id="PS00652">
    <property type="entry name" value="TNFR_NGFR_1"/>
    <property type="match status" value="1"/>
</dbReference>
<dbReference type="PROSITE" id="PS50050">
    <property type="entry name" value="TNFR_NGFR_2"/>
    <property type="match status" value="1"/>
</dbReference>
<name>A53_VACCC</name>
<reference key="1">
    <citation type="journal article" date="1990" name="Virology">
        <title>The complete DNA sequence of vaccinia virus.</title>
        <authorList>
            <person name="Goebel S.J."/>
            <person name="Johnson G.P."/>
            <person name="Perkus M.E."/>
            <person name="Davis S.W."/>
            <person name="Winslow J.P."/>
            <person name="Paoletti E."/>
        </authorList>
    </citation>
    <scope>NUCLEOTIDE SEQUENCE [LARGE SCALE GENOMIC DNA]</scope>
</reference>
<reference key="2">
    <citation type="journal article" date="1990" name="Virology">
        <title>Appendix to 'The complete DNA sequence of vaccinia virus'.</title>
        <authorList>
            <person name="Goebel S.J."/>
            <person name="Johnson G.P."/>
            <person name="Perkus M.E."/>
            <person name="Davis S.W."/>
            <person name="Winslow J.P."/>
            <person name="Paoletti E."/>
        </authorList>
    </citation>
    <scope>NUCLEOTIDE SEQUENCE [LARGE SCALE GENOMIC DNA]</scope>
</reference>
<gene>
    <name type="ORF">A53R</name>
</gene>
<protein>
    <recommendedName>
        <fullName>Truncated secreted TNF-receptor-like protein A53</fullName>
    </recommendedName>
</protein>
<feature type="chain" id="PRO_0000058940" description="Truncated secreted TNF-receptor-like protein A53">
    <location>
        <begin position="1"/>
        <end position="103"/>
    </location>
</feature>
<feature type="repeat" description="TNFR-Cys 1">
    <location>
        <begin position="36"/>
        <end position="73"/>
    </location>
</feature>
<feature type="repeat" description="TNFR-Cys 2; truncated">
    <location>
        <begin position="74"/>
        <end position="103"/>
    </location>
</feature>
<feature type="disulfide bond" evidence="1">
    <location>
        <begin position="37"/>
        <end position="50"/>
    </location>
</feature>
<feature type="disulfide bond" evidence="1">
    <location>
        <begin position="51"/>
        <end position="64"/>
    </location>
</feature>
<feature type="disulfide bond" evidence="1">
    <location>
        <begin position="54"/>
        <end position="72"/>
    </location>
</feature>